<proteinExistence type="inferred from homology"/>
<sequence length="196" mass="21761">MIPVVIEQTSRGERSYDIYSRLLKDRIIMLTGPVEDNMANSIIAQLLFLDAQDNTKDIYLYVNTPGGSVSAGLAIVDTMNFIKSDVQTIVMGMAASMGTIIASSGTKGKRFMLPNAEYLIHQPMGGTGSGTQQTDMAIVAEQLLKTRKRLEKILSDNSGKTIKQIHKDAERDYWMDAKETLEYGFIDAIMENNELK</sequence>
<accession>B9DTU8</accession>
<gene>
    <name evidence="1" type="primary">clpP</name>
    <name type="ordered locus">SUB0429</name>
</gene>
<name>CLPP_STRU0</name>
<comment type="function">
    <text evidence="1">Cleaves peptides in various proteins in a process that requires ATP hydrolysis. Has a chymotrypsin-like activity. Plays a major role in the degradation of misfolded proteins.</text>
</comment>
<comment type="catalytic activity">
    <reaction evidence="1">
        <text>Hydrolysis of proteins to small peptides in the presence of ATP and magnesium. alpha-casein is the usual test substrate. In the absence of ATP, only oligopeptides shorter than five residues are hydrolyzed (such as succinyl-Leu-Tyr-|-NHMec, and Leu-Tyr-Leu-|-Tyr-Trp, in which cleavage of the -Tyr-|-Leu- and -Tyr-|-Trp bonds also occurs).</text>
        <dbReference type="EC" id="3.4.21.92"/>
    </reaction>
</comment>
<comment type="subunit">
    <text evidence="1">Fourteen ClpP subunits assemble into 2 heptameric rings which stack back to back to give a disk-like structure with a central cavity, resembling the structure of eukaryotic proteasomes.</text>
</comment>
<comment type="subcellular location">
    <subcellularLocation>
        <location evidence="1">Cytoplasm</location>
    </subcellularLocation>
</comment>
<comment type="similarity">
    <text evidence="1">Belongs to the peptidase S14 family.</text>
</comment>
<protein>
    <recommendedName>
        <fullName evidence="1">ATP-dependent Clp protease proteolytic subunit</fullName>
        <ecNumber evidence="1">3.4.21.92</ecNumber>
    </recommendedName>
    <alternativeName>
        <fullName evidence="1">Endopeptidase Clp</fullName>
    </alternativeName>
</protein>
<evidence type="ECO:0000255" key="1">
    <source>
        <dbReference type="HAMAP-Rule" id="MF_00444"/>
    </source>
</evidence>
<dbReference type="EC" id="3.4.21.92" evidence="1"/>
<dbReference type="EMBL" id="AM946015">
    <property type="protein sequence ID" value="CAR41093.1"/>
    <property type="molecule type" value="Genomic_DNA"/>
</dbReference>
<dbReference type="RefSeq" id="WP_012657964.1">
    <property type="nucleotide sequence ID" value="NC_012004.1"/>
</dbReference>
<dbReference type="SMR" id="B9DTU8"/>
<dbReference type="STRING" id="218495.SUB0429"/>
<dbReference type="MEROPS" id="S14.001"/>
<dbReference type="GeneID" id="93825731"/>
<dbReference type="KEGG" id="sub:SUB0429"/>
<dbReference type="eggNOG" id="COG0740">
    <property type="taxonomic scope" value="Bacteria"/>
</dbReference>
<dbReference type="HOGENOM" id="CLU_058707_3_2_9"/>
<dbReference type="OrthoDB" id="9802800at2"/>
<dbReference type="Proteomes" id="UP000000449">
    <property type="component" value="Chromosome"/>
</dbReference>
<dbReference type="GO" id="GO:0005737">
    <property type="term" value="C:cytoplasm"/>
    <property type="evidence" value="ECO:0007669"/>
    <property type="project" value="UniProtKB-SubCell"/>
</dbReference>
<dbReference type="GO" id="GO:0009368">
    <property type="term" value="C:endopeptidase Clp complex"/>
    <property type="evidence" value="ECO:0007669"/>
    <property type="project" value="TreeGrafter"/>
</dbReference>
<dbReference type="GO" id="GO:0004176">
    <property type="term" value="F:ATP-dependent peptidase activity"/>
    <property type="evidence" value="ECO:0007669"/>
    <property type="project" value="InterPro"/>
</dbReference>
<dbReference type="GO" id="GO:0051117">
    <property type="term" value="F:ATPase binding"/>
    <property type="evidence" value="ECO:0007669"/>
    <property type="project" value="TreeGrafter"/>
</dbReference>
<dbReference type="GO" id="GO:0004252">
    <property type="term" value="F:serine-type endopeptidase activity"/>
    <property type="evidence" value="ECO:0007669"/>
    <property type="project" value="UniProtKB-UniRule"/>
</dbReference>
<dbReference type="GO" id="GO:0006515">
    <property type="term" value="P:protein quality control for misfolded or incompletely synthesized proteins"/>
    <property type="evidence" value="ECO:0007669"/>
    <property type="project" value="TreeGrafter"/>
</dbReference>
<dbReference type="CDD" id="cd07017">
    <property type="entry name" value="S14_ClpP_2"/>
    <property type="match status" value="1"/>
</dbReference>
<dbReference type="FunFam" id="3.90.226.10:FF:000014">
    <property type="entry name" value="ATP-dependent Clp protease proteolytic subunit"/>
    <property type="match status" value="1"/>
</dbReference>
<dbReference type="Gene3D" id="3.90.226.10">
    <property type="entry name" value="2-enoyl-CoA Hydratase, Chain A, domain 1"/>
    <property type="match status" value="1"/>
</dbReference>
<dbReference type="HAMAP" id="MF_00444">
    <property type="entry name" value="ClpP"/>
    <property type="match status" value="1"/>
</dbReference>
<dbReference type="InterPro" id="IPR001907">
    <property type="entry name" value="ClpP"/>
</dbReference>
<dbReference type="InterPro" id="IPR029045">
    <property type="entry name" value="ClpP/crotonase-like_dom_sf"/>
</dbReference>
<dbReference type="InterPro" id="IPR023562">
    <property type="entry name" value="ClpP/TepA"/>
</dbReference>
<dbReference type="InterPro" id="IPR033135">
    <property type="entry name" value="ClpP_His_AS"/>
</dbReference>
<dbReference type="InterPro" id="IPR018215">
    <property type="entry name" value="ClpP_Ser_AS"/>
</dbReference>
<dbReference type="NCBIfam" id="NF001368">
    <property type="entry name" value="PRK00277.1"/>
    <property type="match status" value="1"/>
</dbReference>
<dbReference type="NCBIfam" id="NF009205">
    <property type="entry name" value="PRK12553.1"/>
    <property type="match status" value="1"/>
</dbReference>
<dbReference type="PANTHER" id="PTHR10381">
    <property type="entry name" value="ATP-DEPENDENT CLP PROTEASE PROTEOLYTIC SUBUNIT"/>
    <property type="match status" value="1"/>
</dbReference>
<dbReference type="PANTHER" id="PTHR10381:SF70">
    <property type="entry name" value="ATP-DEPENDENT CLP PROTEASE PROTEOLYTIC SUBUNIT"/>
    <property type="match status" value="1"/>
</dbReference>
<dbReference type="Pfam" id="PF00574">
    <property type="entry name" value="CLP_protease"/>
    <property type="match status" value="1"/>
</dbReference>
<dbReference type="PRINTS" id="PR00127">
    <property type="entry name" value="CLPPROTEASEP"/>
</dbReference>
<dbReference type="SUPFAM" id="SSF52096">
    <property type="entry name" value="ClpP/crotonase"/>
    <property type="match status" value="1"/>
</dbReference>
<dbReference type="PROSITE" id="PS00382">
    <property type="entry name" value="CLP_PROTEASE_HIS"/>
    <property type="match status" value="1"/>
</dbReference>
<dbReference type="PROSITE" id="PS00381">
    <property type="entry name" value="CLP_PROTEASE_SER"/>
    <property type="match status" value="1"/>
</dbReference>
<feature type="chain" id="PRO_1000135168" description="ATP-dependent Clp protease proteolytic subunit">
    <location>
        <begin position="1"/>
        <end position="196"/>
    </location>
</feature>
<feature type="active site" description="Nucleophile" evidence="1">
    <location>
        <position position="96"/>
    </location>
</feature>
<feature type="active site" evidence="1">
    <location>
        <position position="121"/>
    </location>
</feature>
<keyword id="KW-0963">Cytoplasm</keyword>
<keyword id="KW-0378">Hydrolase</keyword>
<keyword id="KW-0645">Protease</keyword>
<keyword id="KW-1185">Reference proteome</keyword>
<keyword id="KW-0720">Serine protease</keyword>
<organism>
    <name type="scientific">Streptococcus uberis (strain ATCC BAA-854 / 0140J)</name>
    <dbReference type="NCBI Taxonomy" id="218495"/>
    <lineage>
        <taxon>Bacteria</taxon>
        <taxon>Bacillati</taxon>
        <taxon>Bacillota</taxon>
        <taxon>Bacilli</taxon>
        <taxon>Lactobacillales</taxon>
        <taxon>Streptococcaceae</taxon>
        <taxon>Streptococcus</taxon>
    </lineage>
</organism>
<reference key="1">
    <citation type="journal article" date="2009" name="BMC Genomics">
        <title>Evidence for niche adaptation in the genome of the bovine pathogen Streptococcus uberis.</title>
        <authorList>
            <person name="Ward P.N."/>
            <person name="Holden M.T.G."/>
            <person name="Leigh J.A."/>
            <person name="Lennard N."/>
            <person name="Bignell A."/>
            <person name="Barron A."/>
            <person name="Clark L."/>
            <person name="Quail M.A."/>
            <person name="Woodward J."/>
            <person name="Barrell B.G."/>
            <person name="Egan S.A."/>
            <person name="Field T.R."/>
            <person name="Maskell D."/>
            <person name="Kehoe M."/>
            <person name="Dowson C.G."/>
            <person name="Chanter N."/>
            <person name="Whatmore A.M."/>
            <person name="Bentley S.D."/>
            <person name="Parkhill J."/>
        </authorList>
    </citation>
    <scope>NUCLEOTIDE SEQUENCE [LARGE SCALE GENOMIC DNA]</scope>
    <source>
        <strain>ATCC BAA-854 / 0140J</strain>
    </source>
</reference>